<gene>
    <name type="primary">GAS2L2</name>
    <name type="synonym">GAR17</name>
</gene>
<comment type="function">
    <text evidence="2 6 8 9">Involved in the cross-linking of microtubules and microfilaments (PubMed:12584248, PubMed:24706950). Regulates microtubule dynamics and stability by interacting with microtubule plus-end tracking proteins, such as MAPRE1, to regulate microtubule growth along actin stress fibers (PubMed:24706950). Enhances ADORA2-mediated adenylyl cyclase activation by acting as a scaffold to recruit trimeric G-protein complexes to ADORA2A (By similarity). Regulates ciliary orientation and performance in cells located in the airway (PubMed:30665704).</text>
</comment>
<comment type="subunit">
    <text evidence="2 7 8">Interacts with ADORA2A (via its cytoplasmic C-terminal domain) (By similarity). Interacts with GNAS, GNAL, GNAQ, and GNA13 (PubMed:23994616). Interacts with MAPRE1 (PubMed:24706950).</text>
</comment>
<comment type="interaction">
    <interactant intactId="EBI-7960826">
        <id>Q8NHY3</id>
    </interactant>
    <interactant intactId="EBI-11096309">
        <id>Q9NYB9-2</id>
        <label>ABI2</label>
    </interactant>
    <organismsDiffer>false</organismsDiffer>
    <experiments>3</experiments>
</comment>
<comment type="interaction">
    <interactant intactId="EBI-7960826">
        <id>Q8NHY3</id>
    </interactant>
    <interactant intactId="EBI-11524452">
        <id>Q8N9N5-2</id>
        <label>BANP</label>
    </interactant>
    <organismsDiffer>false</organismsDiffer>
    <experiments>3</experiments>
</comment>
<comment type="interaction">
    <interactant intactId="EBI-7960826">
        <id>Q8NHY3</id>
    </interactant>
    <interactant intactId="EBI-14017981">
        <id>P31415</id>
        <label>CASQ1</label>
    </interactant>
    <organismsDiffer>false</organismsDiffer>
    <experiments>3</experiments>
</comment>
<comment type="interaction">
    <interactant intactId="EBI-7960826">
        <id>Q8NHY3</id>
    </interactant>
    <interactant intactId="EBI-744556">
        <id>Q96HB5</id>
        <label>CCDC120</label>
    </interactant>
    <organismsDiffer>false</organismsDiffer>
    <experiments>3</experiments>
</comment>
<comment type="interaction">
    <interactant intactId="EBI-7960826">
        <id>Q8NHY3</id>
    </interactant>
    <interactant intactId="EBI-748961">
        <id>O95273</id>
        <label>CCNDBP1</label>
    </interactant>
    <organismsDiffer>false</organismsDiffer>
    <experiments>3</experiments>
</comment>
<comment type="interaction">
    <interactant intactId="EBI-7960826">
        <id>Q8NHY3</id>
    </interactant>
    <interactant intactId="EBI-11988027">
        <id>Q9NRI5-2</id>
        <label>DISC1</label>
    </interactant>
    <organismsDiffer>false</organismsDiffer>
    <experiments>3</experiments>
</comment>
<comment type="interaction">
    <interactant intactId="EBI-7960826">
        <id>Q8NHY3</id>
    </interactant>
    <interactant intactId="EBI-10239299">
        <id>Q9NQM4</id>
        <label>DNAAF6</label>
    </interactant>
    <organismsDiffer>false</organismsDiffer>
    <experiments>4</experiments>
</comment>
<comment type="interaction">
    <interactant intactId="EBI-7960826">
        <id>Q8NHY3</id>
    </interactant>
    <interactant intactId="EBI-743105">
        <id>Q5JVL4</id>
        <label>EFHC1</label>
    </interactant>
    <organismsDiffer>false</organismsDiffer>
    <experiments>3</experiments>
</comment>
<comment type="interaction">
    <interactant intactId="EBI-7960826">
        <id>Q8NHY3</id>
    </interactant>
    <interactant intactId="EBI-11022345">
        <id>P51114-2</id>
        <label>FXR1</label>
    </interactant>
    <organismsDiffer>false</organismsDiffer>
    <experiments>3</experiments>
</comment>
<comment type="interaction">
    <interactant intactId="EBI-7960826">
        <id>Q8NHY3</id>
    </interactant>
    <interactant intactId="EBI-618309">
        <id>Q08379</id>
        <label>GOLGA2</label>
    </interactant>
    <organismsDiffer>false</organismsDiffer>
    <experiments>3</experiments>
</comment>
<comment type="interaction">
    <interactant intactId="EBI-7960826">
        <id>Q8NHY3</id>
    </interactant>
    <interactant intactId="EBI-5916454">
        <id>A6NEM1</id>
        <label>GOLGA6L9</label>
    </interactant>
    <organismsDiffer>false</organismsDiffer>
    <experiments>3</experiments>
</comment>
<comment type="interaction">
    <interactant intactId="EBI-7960826">
        <id>Q8NHY3</id>
    </interactant>
    <interactant intactId="EBI-2549423">
        <id>Q6NT76</id>
        <label>HMBOX1</label>
    </interactant>
    <organismsDiffer>false</organismsDiffer>
    <experiments>3</experiments>
</comment>
<comment type="interaction">
    <interactant intactId="EBI-7960826">
        <id>Q8NHY3</id>
    </interactant>
    <interactant intactId="EBI-10961706">
        <id>Q96ED9-2</id>
        <label>HOOK2</label>
    </interactant>
    <organismsDiffer>false</organismsDiffer>
    <experiments>3</experiments>
</comment>
<comment type="interaction">
    <interactant intactId="EBI-7960826">
        <id>Q8NHY3</id>
    </interactant>
    <interactant intactId="EBI-7116203">
        <id>O75031</id>
        <label>HSF2BP</label>
    </interactant>
    <organismsDiffer>false</organismsDiffer>
    <experiments>3</experiments>
</comment>
<comment type="interaction">
    <interactant intactId="EBI-7960826">
        <id>Q8NHY3</id>
    </interactant>
    <interactant intactId="EBI-12094820">
        <id>A0A0C4DFT8</id>
        <label>JADE2</label>
    </interactant>
    <organismsDiffer>false</organismsDiffer>
    <experiments>3</experiments>
</comment>
<comment type="interaction">
    <interactant intactId="EBI-7960826">
        <id>Q8NHY3</id>
    </interactant>
    <interactant intactId="EBI-2556193">
        <id>Q63ZY3</id>
        <label>KANK2</label>
    </interactant>
    <organismsDiffer>false</organismsDiffer>
    <experiments>3</experiments>
</comment>
<comment type="interaction">
    <interactant intactId="EBI-7960826">
        <id>Q8NHY3</id>
    </interactant>
    <interactant intactId="EBI-11954971">
        <id>Q96MP8-2</id>
        <label>KCTD7</label>
    </interactant>
    <organismsDiffer>false</organismsDiffer>
    <experiments>3</experiments>
</comment>
<comment type="interaction">
    <interactant intactId="EBI-7960826">
        <id>Q8NHY3</id>
    </interactant>
    <interactant intactId="EBI-12039345">
        <id>Q9UBR4-2</id>
        <label>LHX3</label>
    </interactant>
    <organismsDiffer>false</organismsDiffer>
    <experiments>5</experiments>
</comment>
<comment type="interaction">
    <interactant intactId="EBI-7960826">
        <id>Q8NHY3</id>
    </interactant>
    <interactant intactId="EBI-18273118">
        <id>Q9P2M1</id>
        <label>LRP2BP</label>
    </interactant>
    <organismsDiffer>false</organismsDiffer>
    <experiments>3</experiments>
</comment>
<comment type="interaction">
    <interactant intactId="EBI-7960826">
        <id>Q8NHY3</id>
    </interactant>
    <interactant intactId="EBI-2558389">
        <id>Q96GA3</id>
        <label>LTV1</label>
    </interactant>
    <organismsDiffer>false</organismsDiffer>
    <experiments>3</experiments>
</comment>
<comment type="interaction">
    <interactant intactId="EBI-7960826">
        <id>Q8NHY3</id>
    </interactant>
    <interactant intactId="EBI-1004115">
        <id>Q15691</id>
        <label>MAPRE1</label>
    </interactant>
    <organismsDiffer>false</organismsDiffer>
    <experiments>6</experiments>
</comment>
<comment type="interaction">
    <interactant intactId="EBI-7960826">
        <id>Q8NHY3</id>
    </interactant>
    <interactant intactId="EBI-739717">
        <id>Q15555</id>
        <label>MAPRE2</label>
    </interactant>
    <organismsDiffer>false</organismsDiffer>
    <experiments>5</experiments>
</comment>
<comment type="interaction">
    <interactant intactId="EBI-7960826">
        <id>Q8NHY3</id>
    </interactant>
    <interactant intactId="EBI-726739">
        <id>Q9UPY8</id>
        <label>MAPRE3</label>
    </interactant>
    <organismsDiffer>false</organismsDiffer>
    <experiments>6</experiments>
</comment>
<comment type="interaction">
    <interactant intactId="EBI-7960826">
        <id>Q8NHY3</id>
    </interactant>
    <interactant intactId="EBI-10172526">
        <id>Q9UJV3-2</id>
        <label>MID2</label>
    </interactant>
    <organismsDiffer>false</organismsDiffer>
    <experiments>3</experiments>
</comment>
<comment type="interaction">
    <interactant intactId="EBI-7960826">
        <id>Q8NHY3</id>
    </interactant>
    <interactant intactId="EBI-12835568">
        <id>Q5VZ52</id>
        <label>MORN5</label>
    </interactant>
    <organismsDiffer>false</organismsDiffer>
    <experiments>3</experiments>
</comment>
<comment type="interaction">
    <interactant intactId="EBI-7960826">
        <id>Q8NHY3</id>
    </interactant>
    <interactant intactId="EBI-11522433">
        <id>Q5JR59-3</id>
        <label>MTUS2</label>
    </interactant>
    <organismsDiffer>false</organismsDiffer>
    <experiments>3</experiments>
</comment>
<comment type="interaction">
    <interactant intactId="EBI-7960826">
        <id>Q8NHY3</id>
    </interactant>
    <interactant intactId="EBI-356392">
        <id>P55209</id>
        <label>NAP1L1</label>
    </interactant>
    <organismsDiffer>false</organismsDiffer>
    <experiments>3</experiments>
</comment>
<comment type="interaction">
    <interactant intactId="EBI-7960826">
        <id>Q8NHY3</id>
    </interactant>
    <interactant intactId="EBI-747278">
        <id>P26367</id>
        <label>PAX6</label>
    </interactant>
    <organismsDiffer>false</organismsDiffer>
    <experiments>3</experiments>
</comment>
<comment type="interaction">
    <interactant intactId="EBI-7960826">
        <id>Q8NHY3</id>
    </interactant>
    <interactant intactId="EBI-79165">
        <id>Q9NRD5</id>
        <label>PICK1</label>
    </interactant>
    <organismsDiffer>false</organismsDiffer>
    <experiments>3</experiments>
</comment>
<comment type="interaction">
    <interactant intactId="EBI-7960826">
        <id>Q8NHY3</id>
    </interactant>
    <interactant intactId="EBI-1105153">
        <id>Q96KQ4</id>
        <label>PPP1R13B</label>
    </interactant>
    <organismsDiffer>false</organismsDiffer>
    <experiments>3</experiments>
</comment>
<comment type="interaction">
    <interactant intactId="EBI-7960826">
        <id>Q8NHY3</id>
    </interactant>
    <interactant intactId="EBI-2805516">
        <id>P31321</id>
        <label>PRKAR1B</label>
    </interactant>
    <organismsDiffer>false</organismsDiffer>
    <experiments>3</experiments>
</comment>
<comment type="interaction">
    <interactant intactId="EBI-7960826">
        <id>Q8NHY3</id>
    </interactant>
    <interactant intactId="EBI-18560266">
        <id>Q92753-1</id>
        <label>RORB</label>
    </interactant>
    <organismsDiffer>false</organismsDiffer>
    <experiments>3</experiments>
</comment>
<comment type="interaction">
    <interactant intactId="EBI-7960826">
        <id>Q8NHY3</id>
    </interactant>
    <interactant intactId="EBI-711613">
        <id>P21673</id>
        <label>SAT1</label>
    </interactant>
    <organismsDiffer>false</organismsDiffer>
    <experiments>3</experiments>
</comment>
<comment type="interaction">
    <interactant intactId="EBI-7960826">
        <id>Q8NHY3</id>
    </interactant>
    <interactant intactId="EBI-632715">
        <id>Q13573</id>
        <label>SNW1</label>
    </interactant>
    <organismsDiffer>false</organismsDiffer>
    <experiments>3</experiments>
</comment>
<comment type="interaction">
    <interactant intactId="EBI-7960826">
        <id>Q8NHY3</id>
    </interactant>
    <interactant intactId="EBI-1539606">
        <id>O14512</id>
        <label>SOCS7</label>
    </interactant>
    <organismsDiffer>false</organismsDiffer>
    <experiments>3</experiments>
</comment>
<comment type="interaction">
    <interactant intactId="EBI-7960826">
        <id>Q8NHY3</id>
    </interactant>
    <interactant intactId="EBI-1105213">
        <id>Q9UBB9</id>
        <label>TFIP11</label>
    </interactant>
    <organismsDiffer>false</organismsDiffer>
    <experiments>3</experiments>
</comment>
<comment type="interaction">
    <interactant intactId="EBI-7960826">
        <id>Q8NHY3</id>
    </interactant>
    <interactant intactId="EBI-355744">
        <id>Q12933</id>
        <label>TRAF2</label>
    </interactant>
    <organismsDiffer>false</organismsDiffer>
    <experiments>3</experiments>
</comment>
<comment type="interaction">
    <interactant intactId="EBI-7960826">
        <id>Q8NHY3</id>
    </interactant>
    <interactant intactId="EBI-719493">
        <id>P14373</id>
        <label>TRIM27</label>
    </interactant>
    <organismsDiffer>false</organismsDiffer>
    <experiments>3</experiments>
</comment>
<comment type="interaction">
    <interactant intactId="EBI-7960826">
        <id>Q8NHY3</id>
    </interactant>
    <interactant intactId="EBI-743923">
        <id>O00308</id>
        <label>WWP2</label>
    </interactant>
    <organismsDiffer>false</organismsDiffer>
    <experiments>3</experiments>
</comment>
<comment type="interaction">
    <interactant intactId="EBI-7960826">
        <id>Q8NHY3</id>
    </interactant>
    <interactant intactId="EBI-527853">
        <id>Q9UGI0</id>
        <label>ZRANB1</label>
    </interactant>
    <organismsDiffer>false</organismsDiffer>
    <experiments>3</experiments>
</comment>
<comment type="subcellular location">
    <subcellularLocation>
        <location evidence="6 9">Cytoplasm</location>
        <location evidence="6 9">Cytoskeleton</location>
    </subcellularLocation>
    <subcellularLocation>
        <location evidence="2">Cell membrane</location>
    </subcellularLocation>
    <subcellularLocation>
        <location evidence="8 9">Cytoplasm</location>
        <location evidence="8 9">Cytoskeleton</location>
        <location evidence="8 9">Stress fiber</location>
    </subcellularLocation>
    <subcellularLocation>
        <location evidence="9">Cytoplasm</location>
        <location evidence="9">Cytoskeleton</location>
        <location evidence="9">Cilium basal body</location>
    </subcellularLocation>
    <text evidence="1 8">Colocalizes with ADORA2A at neuronal processes (By similarity). Colocalizes with and tracks the tips of microtubule plus ends (PubMed:24706950).</text>
</comment>
<comment type="alternative products">
    <event type="alternative splicing"/>
    <isoform>
        <id>Q8NHY3-1</id>
        <name>1</name>
        <name>Beta</name>
        <sequence type="displayed"/>
    </isoform>
    <isoform>
        <id>Q8NHY3-2</id>
        <name>2</name>
        <name>Alpha</name>
        <sequence type="described" ref="VSP_015497 VSP_015498"/>
    </isoform>
</comment>
<comment type="tissue specificity">
    <text evidence="6 9">Expressed in bronchial and nasal epithelial cells (at protein level) (PubMed:30665704). Expressed in brain, kidney, lung, testis, fallopian tubes, and skeletal muscle (PubMed:12584248, PubMed:30665704). Expressed at low levels in stomach and colon (PubMed:30665704).</text>
</comment>
<comment type="disease" evidence="9">
    <disease id="DI-05575">
        <name>Ciliary dyskinesia, primary, 41</name>
        <acronym>CILD41</acronym>
        <description>A form of primary ciliary dyskinesia, a disorder characterized by abnormalities of motile cilia. Respiratory infections leading to chronic inflammation and bronchiectasis are recurrent, due to defects in the respiratory cilia. CILD41 inheritance is autosomal recessive.</description>
        <dbReference type="MIM" id="618449"/>
    </disease>
    <text evidence="9">The disease is caused by variants affecting the gene represented in this entry. Absence of GAS2L2 results in ciliary orientation defect and affects performance of cilia.</text>
</comment>
<comment type="similarity">
    <text evidence="11">Belongs to the GAS2 family.</text>
</comment>
<protein>
    <recommendedName>
        <fullName>GAS2-like protein 2</fullName>
    </recommendedName>
    <alternativeName>
        <fullName>GAS2-related protein on chromosome 17</fullName>
    </alternativeName>
    <alternativeName>
        <fullName>Growth arrest-specific protein 2-like 2</fullName>
    </alternativeName>
</protein>
<dbReference type="EMBL" id="AF508785">
    <property type="protein sequence ID" value="AAM34265.1"/>
    <property type="molecule type" value="mRNA"/>
</dbReference>
<dbReference type="EMBL" id="AF508784">
    <property type="protein sequence ID" value="AAM34264.1"/>
    <property type="molecule type" value="mRNA"/>
</dbReference>
<dbReference type="CCDS" id="CCDS11298.1">
    <molecule id="Q8NHY3-1"/>
</dbReference>
<dbReference type="RefSeq" id="NP_644814.1">
    <molecule id="Q8NHY3-1"/>
    <property type="nucleotide sequence ID" value="NM_139285.4"/>
</dbReference>
<dbReference type="SMR" id="Q8NHY3"/>
<dbReference type="BioGRID" id="128874">
    <property type="interactions" value="55"/>
</dbReference>
<dbReference type="CORUM" id="Q8NHY3"/>
<dbReference type="FunCoup" id="Q8NHY3">
    <property type="interactions" value="20"/>
</dbReference>
<dbReference type="IntAct" id="Q8NHY3">
    <property type="interactions" value="59"/>
</dbReference>
<dbReference type="MINT" id="Q8NHY3"/>
<dbReference type="STRING" id="9606.ENSP00000474529"/>
<dbReference type="GlyGen" id="Q8NHY3">
    <property type="glycosylation" value="3 sites"/>
</dbReference>
<dbReference type="iPTMnet" id="Q8NHY3"/>
<dbReference type="PhosphoSitePlus" id="Q8NHY3"/>
<dbReference type="BioMuta" id="GAS2L2"/>
<dbReference type="DMDM" id="73919614"/>
<dbReference type="MassIVE" id="Q8NHY3"/>
<dbReference type="PaxDb" id="9606-ENSP00000474529"/>
<dbReference type="PeptideAtlas" id="Q8NHY3"/>
<dbReference type="ProteomicsDB" id="73788">
    <molecule id="Q8NHY3-1"/>
</dbReference>
<dbReference type="ProteomicsDB" id="73789">
    <molecule id="Q8NHY3-2"/>
</dbReference>
<dbReference type="Antibodypedia" id="73370">
    <property type="antibodies" value="69 antibodies from 16 providers"/>
</dbReference>
<dbReference type="DNASU" id="246176"/>
<dbReference type="Ensembl" id="ENST00000604641.6">
    <molecule id="Q8NHY3-1"/>
    <property type="protein sequence ID" value="ENSP00000474529.2"/>
    <property type="gene ID" value="ENSG00000270765.7"/>
</dbReference>
<dbReference type="GeneID" id="246176"/>
<dbReference type="KEGG" id="hsa:246176"/>
<dbReference type="MANE-Select" id="ENST00000604641.6">
    <property type="protein sequence ID" value="ENSP00000474529.2"/>
    <property type="RefSeq nucleotide sequence ID" value="NM_139285.4"/>
    <property type="RefSeq protein sequence ID" value="NP_644814.1"/>
</dbReference>
<dbReference type="UCSC" id="uc002hjv.2">
    <molecule id="Q8NHY3-1"/>
    <property type="organism name" value="human"/>
</dbReference>
<dbReference type="AGR" id="HGNC:24846"/>
<dbReference type="CTD" id="246176"/>
<dbReference type="DisGeNET" id="246176"/>
<dbReference type="GeneCards" id="GAS2L2"/>
<dbReference type="HGNC" id="HGNC:24846">
    <property type="gene designation" value="GAS2L2"/>
</dbReference>
<dbReference type="HPA" id="ENSG00000270765">
    <property type="expression patterns" value="Group enriched (choroid plexus, fallopian tube)"/>
</dbReference>
<dbReference type="MalaCards" id="GAS2L2"/>
<dbReference type="MIM" id="611398">
    <property type="type" value="gene"/>
</dbReference>
<dbReference type="MIM" id="618449">
    <property type="type" value="phenotype"/>
</dbReference>
<dbReference type="neXtProt" id="NX_Q8NHY3"/>
<dbReference type="OpenTargets" id="ENSG00000270765"/>
<dbReference type="Orphanet" id="244">
    <property type="disease" value="Primary ciliary dyskinesia"/>
</dbReference>
<dbReference type="PharmGKB" id="PA134986846"/>
<dbReference type="VEuPathDB" id="HostDB:ENSG00000270765"/>
<dbReference type="eggNOG" id="KOG0516">
    <property type="taxonomic scope" value="Eukaryota"/>
</dbReference>
<dbReference type="GeneTree" id="ENSGT00940000162866"/>
<dbReference type="InParanoid" id="Q8NHY3"/>
<dbReference type="OMA" id="HPAGLHY"/>
<dbReference type="OrthoDB" id="206130at2759"/>
<dbReference type="PAN-GO" id="Q8NHY3">
    <property type="GO annotations" value="10 GO annotations based on evolutionary models"/>
</dbReference>
<dbReference type="PhylomeDB" id="Q8NHY3"/>
<dbReference type="TreeFam" id="TF323754"/>
<dbReference type="PathwayCommons" id="Q8NHY3"/>
<dbReference type="SignaLink" id="Q8NHY3"/>
<dbReference type="BioGRID-ORCS" id="246176">
    <property type="hits" value="34 hits in 1145 CRISPR screens"/>
</dbReference>
<dbReference type="ChiTaRS" id="GAS2L2">
    <property type="organism name" value="human"/>
</dbReference>
<dbReference type="GenomeRNAi" id="246176"/>
<dbReference type="Pharos" id="Q8NHY3">
    <property type="development level" value="Tdark"/>
</dbReference>
<dbReference type="PRO" id="PR:Q8NHY3"/>
<dbReference type="Proteomes" id="UP000005640">
    <property type="component" value="Chromosome 17"/>
</dbReference>
<dbReference type="RNAct" id="Q8NHY3">
    <property type="molecule type" value="protein"/>
</dbReference>
<dbReference type="Bgee" id="ENSG00000270765">
    <property type="expression patterns" value="Expressed in right uterine tube and 72 other cell types or tissues"/>
</dbReference>
<dbReference type="GO" id="GO:0036064">
    <property type="term" value="C:ciliary basal body"/>
    <property type="evidence" value="ECO:0007669"/>
    <property type="project" value="Ensembl"/>
</dbReference>
<dbReference type="GO" id="GO:0005737">
    <property type="term" value="C:cytoplasm"/>
    <property type="evidence" value="ECO:0000314"/>
    <property type="project" value="UniProtKB"/>
</dbReference>
<dbReference type="GO" id="GO:0005886">
    <property type="term" value="C:plasma membrane"/>
    <property type="evidence" value="ECO:0007669"/>
    <property type="project" value="UniProtKB-SubCell"/>
</dbReference>
<dbReference type="GO" id="GO:0001725">
    <property type="term" value="C:stress fiber"/>
    <property type="evidence" value="ECO:0007669"/>
    <property type="project" value="UniProtKB-SubCell"/>
</dbReference>
<dbReference type="GO" id="GO:0051015">
    <property type="term" value="F:actin filament binding"/>
    <property type="evidence" value="ECO:0000314"/>
    <property type="project" value="UniProtKB"/>
</dbReference>
<dbReference type="GO" id="GO:0008093">
    <property type="term" value="F:cytoskeletal anchor activity"/>
    <property type="evidence" value="ECO:0000314"/>
    <property type="project" value="UniProtKB"/>
</dbReference>
<dbReference type="GO" id="GO:0001965">
    <property type="term" value="F:G-protein alpha-subunit binding"/>
    <property type="evidence" value="ECO:0007669"/>
    <property type="project" value="Ensembl"/>
</dbReference>
<dbReference type="GO" id="GO:0008017">
    <property type="term" value="F:microtubule binding"/>
    <property type="evidence" value="ECO:0000314"/>
    <property type="project" value="UniProtKB"/>
</dbReference>
<dbReference type="GO" id="GO:0051764">
    <property type="term" value="P:actin crosslink formation"/>
    <property type="evidence" value="ECO:0000318"/>
    <property type="project" value="GO_Central"/>
</dbReference>
<dbReference type="GO" id="GO:0001578">
    <property type="term" value="P:microtubule bundle formation"/>
    <property type="evidence" value="ECO:0000315"/>
    <property type="project" value="UniProtKB"/>
</dbReference>
<dbReference type="GO" id="GO:0007026">
    <property type="term" value="P:negative regulation of microtubule depolymerization"/>
    <property type="evidence" value="ECO:0000315"/>
    <property type="project" value="UniProtKB"/>
</dbReference>
<dbReference type="GO" id="GO:0045745">
    <property type="term" value="P:positive regulation of G protein-coupled receptor signaling pathway"/>
    <property type="evidence" value="ECO:0007669"/>
    <property type="project" value="Ensembl"/>
</dbReference>
<dbReference type="GO" id="GO:1904825">
    <property type="term" value="P:protein localization to microtubule plus-end"/>
    <property type="evidence" value="ECO:0000314"/>
    <property type="project" value="UniProtKB"/>
</dbReference>
<dbReference type="GO" id="GO:0060296">
    <property type="term" value="P:regulation of cilium beat frequency involved in ciliary motility"/>
    <property type="evidence" value="ECO:0000315"/>
    <property type="project" value="UniProtKB"/>
</dbReference>
<dbReference type="GO" id="GO:0031110">
    <property type="term" value="P:regulation of microtubule polymerization or depolymerization"/>
    <property type="evidence" value="ECO:0000315"/>
    <property type="project" value="UniProtKB"/>
</dbReference>
<dbReference type="CDD" id="cd21268">
    <property type="entry name" value="CH_GAS2L1_2"/>
    <property type="match status" value="1"/>
</dbReference>
<dbReference type="FunFam" id="3.30.920.20:FF:000004">
    <property type="entry name" value="GAS2-like protein 1 isoform X1"/>
    <property type="match status" value="1"/>
</dbReference>
<dbReference type="FunFam" id="1.10.418.10:FF:000047">
    <property type="entry name" value="Growth arrest specific 2 like 1"/>
    <property type="match status" value="1"/>
</dbReference>
<dbReference type="Gene3D" id="1.10.418.10">
    <property type="entry name" value="Calponin-like domain"/>
    <property type="match status" value="1"/>
</dbReference>
<dbReference type="Gene3D" id="3.30.920.20">
    <property type="entry name" value="Gas2-like domain"/>
    <property type="match status" value="1"/>
</dbReference>
<dbReference type="InterPro" id="IPR001715">
    <property type="entry name" value="CH_dom"/>
</dbReference>
<dbReference type="InterPro" id="IPR036872">
    <property type="entry name" value="CH_dom_sf"/>
</dbReference>
<dbReference type="InterPro" id="IPR003108">
    <property type="entry name" value="GAR_dom"/>
</dbReference>
<dbReference type="InterPro" id="IPR036534">
    <property type="entry name" value="GAR_dom_sf"/>
</dbReference>
<dbReference type="PANTHER" id="PTHR46756:SF14">
    <property type="entry name" value="GAS2-LIKE PROTEIN 2"/>
    <property type="match status" value="1"/>
</dbReference>
<dbReference type="PANTHER" id="PTHR46756">
    <property type="entry name" value="TRANSGELIN"/>
    <property type="match status" value="1"/>
</dbReference>
<dbReference type="Pfam" id="PF00307">
    <property type="entry name" value="CH"/>
    <property type="match status" value="1"/>
</dbReference>
<dbReference type="Pfam" id="PF02187">
    <property type="entry name" value="GAS2"/>
    <property type="match status" value="1"/>
</dbReference>
<dbReference type="SMART" id="SM00033">
    <property type="entry name" value="CH"/>
    <property type="match status" value="1"/>
</dbReference>
<dbReference type="SMART" id="SM00243">
    <property type="entry name" value="GAS2"/>
    <property type="match status" value="1"/>
</dbReference>
<dbReference type="SUPFAM" id="SSF47576">
    <property type="entry name" value="Calponin-homology domain, CH-domain"/>
    <property type="match status" value="1"/>
</dbReference>
<dbReference type="SUPFAM" id="SSF143575">
    <property type="entry name" value="GAS2 domain-like"/>
    <property type="match status" value="1"/>
</dbReference>
<dbReference type="PROSITE" id="PS50021">
    <property type="entry name" value="CH"/>
    <property type="match status" value="1"/>
</dbReference>
<dbReference type="PROSITE" id="PS51460">
    <property type="entry name" value="GAR"/>
    <property type="match status" value="1"/>
</dbReference>
<organism>
    <name type="scientific">Homo sapiens</name>
    <name type="common">Human</name>
    <dbReference type="NCBI Taxonomy" id="9606"/>
    <lineage>
        <taxon>Eukaryota</taxon>
        <taxon>Metazoa</taxon>
        <taxon>Chordata</taxon>
        <taxon>Craniata</taxon>
        <taxon>Vertebrata</taxon>
        <taxon>Euteleostomi</taxon>
        <taxon>Mammalia</taxon>
        <taxon>Eutheria</taxon>
        <taxon>Euarchontoglires</taxon>
        <taxon>Primates</taxon>
        <taxon>Haplorrhini</taxon>
        <taxon>Catarrhini</taxon>
        <taxon>Hominidae</taxon>
        <taxon>Homo</taxon>
    </lineage>
</organism>
<keyword id="KW-0025">Alternative splicing</keyword>
<keyword id="KW-1003">Cell membrane</keyword>
<keyword id="KW-0966">Cell projection</keyword>
<keyword id="KW-1186">Ciliopathy</keyword>
<keyword id="KW-0963">Cytoplasm</keyword>
<keyword id="KW-0206">Cytoskeleton</keyword>
<keyword id="KW-0472">Membrane</keyword>
<keyword id="KW-0990">Primary ciliary dyskinesia</keyword>
<keyword id="KW-1267">Proteomics identification</keyword>
<keyword id="KW-1185">Reference proteome</keyword>
<accession>Q8NHY3</accession>
<accession>Q8NHY4</accession>
<proteinExistence type="evidence at protein level"/>
<feature type="chain" id="PRO_0000190444" description="GAS2-like protein 2">
    <location>
        <begin position="1"/>
        <end position="880"/>
    </location>
</feature>
<feature type="domain" description="Calponin-homology (CH)" evidence="3">
    <location>
        <begin position="32"/>
        <end position="159"/>
    </location>
</feature>
<feature type="domain" description="GAR" evidence="4">
    <location>
        <begin position="201"/>
        <end position="273"/>
    </location>
</feature>
<feature type="region of interest" description="Disordered" evidence="5">
    <location>
        <begin position="180"/>
        <end position="200"/>
    </location>
</feature>
<feature type="region of interest" description="Disordered" evidence="5">
    <location>
        <begin position="283"/>
        <end position="360"/>
    </location>
</feature>
<feature type="region of interest" description="Disordered" evidence="5">
    <location>
        <begin position="372"/>
        <end position="437"/>
    </location>
</feature>
<feature type="region of interest" description="Interaction with ADORA2A" evidence="2">
    <location>
        <begin position="438"/>
        <end position="880"/>
    </location>
</feature>
<feature type="region of interest" description="Disordered" evidence="5">
    <location>
        <begin position="489"/>
        <end position="533"/>
    </location>
</feature>
<feature type="region of interest" description="Disordered" evidence="5">
    <location>
        <begin position="676"/>
        <end position="880"/>
    </location>
</feature>
<feature type="compositionally biased region" description="Pro residues" evidence="5">
    <location>
        <begin position="185"/>
        <end position="198"/>
    </location>
</feature>
<feature type="compositionally biased region" description="Polar residues" evidence="5">
    <location>
        <begin position="301"/>
        <end position="315"/>
    </location>
</feature>
<feature type="compositionally biased region" description="Pro residues" evidence="5">
    <location>
        <begin position="506"/>
        <end position="515"/>
    </location>
</feature>
<feature type="compositionally biased region" description="Polar residues" evidence="5">
    <location>
        <begin position="725"/>
        <end position="734"/>
    </location>
</feature>
<feature type="compositionally biased region" description="Basic residues" evidence="5">
    <location>
        <begin position="757"/>
        <end position="767"/>
    </location>
</feature>
<feature type="compositionally biased region" description="Basic residues" evidence="5">
    <location>
        <begin position="774"/>
        <end position="785"/>
    </location>
</feature>
<feature type="splice variant" id="VSP_015497" description="In isoform 2." evidence="10">
    <original>PPDPSPPAPPRRQPCHFRNLDQMVQSL</original>
    <variation>LPQPGPDGAEPCEPLHVPSAVLHGQSV</variation>
    <location>
        <begin position="187"/>
        <end position="213"/>
    </location>
</feature>
<feature type="splice variant" id="VSP_015498" description="In isoform 2." evidence="10">
    <location>
        <begin position="214"/>
        <end position="800"/>
    </location>
</feature>
<feature type="sequence variant" id="VAR_059975" description="In dbSNP:rs11654604.">
    <original>A</original>
    <variation>V</variation>
    <location>
        <position position="164"/>
    </location>
</feature>
<feature type="sequence variant" id="VAR_053100" description="In dbSNP:rs12602590.">
    <original>A</original>
    <variation>T</variation>
    <location>
        <position position="540"/>
    </location>
</feature>
<feature type="sequence variant" id="VAR_053101" description="In dbSNP:rs3744374.">
    <original>A</original>
    <variation>V</variation>
    <location>
        <position position="654"/>
    </location>
</feature>
<feature type="sequence variant" id="VAR_062004" description="In dbSNP:rs56386706.">
    <original>R</original>
    <variation>W</variation>
    <location>
        <position position="829"/>
    </location>
</feature>
<feature type="mutagenesis site" description="Loss of microtubule-end localization, microtubule plus-end tracking, and decreases MAPRE1 binding; when associated with 458-N--N-459, 503-N-N-504; 590-N-N-591 and 795-N-N-796." evidence="8">
    <original>IP</original>
    <variation>NN</variation>
    <location>
        <begin position="369"/>
        <end position="370"/>
    </location>
</feature>
<feature type="mutagenesis site" description="Loss of microtubule-end localization, microtubule plus-end tracking, and decreases MAPRE1 binding; when associated with 369-N--N-370; 503-N-N-504; 590-N-N-591 and 795-N-N-796." evidence="8">
    <original>LP</original>
    <variation>NN</variation>
    <location>
        <begin position="458"/>
        <end position="459"/>
    </location>
</feature>
<feature type="mutagenesis site" description="Loss of microtubule-end localization, microtubule plus-end tracking, and decreases MAPRE1 binding; when associated with 369-N-N-370; 458-N-N-459; 590-N-N-591 and 795-N-N-796." evidence="8">
    <original>IP</original>
    <variation>NN</variation>
    <location>
        <begin position="503"/>
        <end position="504"/>
    </location>
</feature>
<feature type="mutagenesis site" description="Loss of microtubule-end localization, microtubule plus-end tracking, and decreases MAPRE1 binding; when associated with 369-N-N-370; 458-N-N-459; 503-N-N-504 and 795-N-N-796." evidence="8">
    <original>LP</original>
    <variation>NN</variation>
    <location>
        <begin position="590"/>
        <end position="591"/>
    </location>
</feature>
<feature type="mutagenesis site" description="Loss of microtubule-end localization, microtubule plus-end tracking, and decreases MAPRE1 binding; when associated with 369-N-N-370; 458-N-N-459; 503-N-N-504 and 590-N-N-591." evidence="8">
    <original>IP</original>
    <variation>NN</variation>
    <location>
        <begin position="795"/>
        <end position="796"/>
    </location>
</feature>
<reference key="1">
    <citation type="journal article" date="2003" name="J. Cell Sci.">
        <title>Protein products of human Gas2-related genes on chromosomes 17 and 22 (hGAR17 and hGAR22) associate with both microfilaments and microtubules.</title>
        <authorList>
            <person name="Goriounov D."/>
            <person name="Leung C.L."/>
            <person name="Liem R.K."/>
        </authorList>
    </citation>
    <scope>NUCLEOTIDE SEQUENCE [MRNA] (ISOFORMS 1 AND 2)</scope>
    <scope>FUNCTION</scope>
    <scope>SUBCELLULAR LOCATION</scope>
    <scope>TISSUE SPECIFICITY</scope>
</reference>
<reference key="2">
    <citation type="journal article" date="2013" name="Biochim. Biophys. Acta">
        <title>A novel Galphas-binding protein, Gas-2 like 2, facilitates the signaling of the A2A adenosine receptor.</title>
        <authorList>
            <person name="Wu Y.C."/>
            <person name="Lai H.L."/>
            <person name="Chang W.C."/>
            <person name="Lin J.T."/>
            <person name="Liu Y.J."/>
            <person name="Chern Y."/>
        </authorList>
    </citation>
    <scope>INTERACTION WITH GNAS; GNAL; GNAQ AND GNA13</scope>
</reference>
<reference key="3">
    <citation type="journal article" date="2014" name="J. Cell Sci.">
        <title>GAS2-like proteins mediate communication between microtubules and actin through interactions with end-binding proteins.</title>
        <authorList>
            <person name="Stroud M.J."/>
            <person name="Nazgiewicz A."/>
            <person name="McKenzie E.A."/>
            <person name="Wang Y."/>
            <person name="Kammerer R.A."/>
            <person name="Ballestrem C."/>
        </authorList>
    </citation>
    <scope>FUNCTION</scope>
    <scope>INTERACTION WITH MAPRE1</scope>
    <scope>SUBCELLULAR LOCATION</scope>
    <scope>MUTAGENESIS OF 369-ILE-PRO-370; 458-LEU-PRO-459; 503-ILE-PRO-504; 590-LEU-PRO-591 AND 795-ILE-PRO-796</scope>
</reference>
<reference key="4">
    <citation type="journal article" date="2019" name="Am. J. Hum. Genet.">
        <title>Lack of GAS2L2 Causes PCD by Impairing Cilia Orientation and Mucociliary Clearance.</title>
        <authorList>
            <person name="Bustamante-Marin X.M."/>
            <person name="Yin W.N."/>
            <person name="Sears P.R."/>
            <person name="Werner M.E."/>
            <person name="Brotslaw E.J."/>
            <person name="Mitchell B.J."/>
            <person name="Jania C.M."/>
            <person name="Zeman K.L."/>
            <person name="Rogers T.D."/>
            <person name="Herring L.E."/>
            <person name="Refabert L."/>
            <person name="Thomas L."/>
            <person name="Amselem S."/>
            <person name="Escudier E."/>
            <person name="Legendre M."/>
            <person name="Grubb B.R."/>
            <person name="Knowles M.R."/>
            <person name="Zariwala M.A."/>
            <person name="Ostrowski L.E."/>
        </authorList>
    </citation>
    <scope>IDENTIFICATION BY MASS SPECTROMETRY</scope>
    <scope>FUNCTION</scope>
    <scope>SUBCELLULAR LOCATION</scope>
    <scope>TISSUE SPECIFICITY</scope>
    <scope>INVOLVEMENT IN CILD41</scope>
</reference>
<evidence type="ECO:0000250" key="1">
    <source>
        <dbReference type="UniProtKB" id="D3ZUE1"/>
    </source>
</evidence>
<evidence type="ECO:0000250" key="2">
    <source>
        <dbReference type="UniProtKB" id="Q5SSG4"/>
    </source>
</evidence>
<evidence type="ECO:0000255" key="3">
    <source>
        <dbReference type="PROSITE-ProRule" id="PRU00044"/>
    </source>
</evidence>
<evidence type="ECO:0000255" key="4">
    <source>
        <dbReference type="PROSITE-ProRule" id="PRU00792"/>
    </source>
</evidence>
<evidence type="ECO:0000256" key="5">
    <source>
        <dbReference type="SAM" id="MobiDB-lite"/>
    </source>
</evidence>
<evidence type="ECO:0000269" key="6">
    <source>
    </source>
</evidence>
<evidence type="ECO:0000269" key="7">
    <source>
    </source>
</evidence>
<evidence type="ECO:0000269" key="8">
    <source>
    </source>
</evidence>
<evidence type="ECO:0000269" key="9">
    <source>
    </source>
</evidence>
<evidence type="ECO:0000303" key="10">
    <source>
    </source>
</evidence>
<evidence type="ECO:0000305" key="11"/>
<sequence length="880" mass="96520">MSQPAGGRRKPRTLGPPVCSIRPFKSSEQYLEAMKEDLAEWLRDLYGLDIDAANFLQVLETGLVLCQHANVVTDAALAFLAEAPAQAQKIPMPRVGVSCNGAAQPGTFQARDNVSNFIQWCRKEMGIQEVLMFETEDLVLRKNVKNVVLCLLELGRRAWRFGVAAPTLVQLEEEIEEEVRRELALPPPDPSPPAPPRRQPCHFRNLDQMVQSLVSHCTCPVQFSMVKVSEGKYRVGDSNTLIFIRILRNHVMVRVGGGWDTLGHYLDKHDPCRCTSLSHKPGSFLKPPAPPVQHEVRVQDGPSQTQPTMTISRSQSPPPPVDWKTYTSSDRRLRPPTPSSPRPRRERGAGTGASREMAPFLRCQERSLIPSWRQPTAGDSPPSPQSSSTQKGRDPQCTSSGKREERYPPELPRGRIPTSWVHEETDSWGTDAGNPTPQRLRAIEATTKGISARGPSPLPRSFGPAECLGLRLPLRDEAKGAFFQFREPESVRSPTPVQGLTKIPIRLPPARPPTPGRSFPGATSGSPRTELGRDPIPLRAVTVDLAGSTHGDCSVEVRQEDQQLDIQVMAEARESWDLGLQEQEGRYTPLPLGGNKEQAIYCSLEEEILGNMKLLEVRSACPQGTRSGVIPRSGVYIPRLAGQWPEPGGPYDKAIQELAQGSPSLLKVDLEAWKAAPTGSPKPAVTPGPGSLKGKLGARQSGPRTKASLSAKGTHMRKVPPQGGQDCSASTVSASPEAPTPSPLDPNSDKAKACLSKGRRTLRKPKRVPSIYKLKLRPRIRPRRDHRPEKQPSRIPRPLAYVFLGPARQPPKDRLLRAVLGSKGGEASRVDGASVGEEEEEGKEEKEPAAPLESSPQPPEGLQPHWLNQAPLPPEEESWV</sequence>
<name>GA2L2_HUMAN</name>